<proteinExistence type="evidence at transcript level"/>
<sequence>MDEMNLGPEAQELHDSIVAEIQSGVLKLKDGLPFGTGDETEMQYDVTLRELTAGDMIDAQAAAEKLVMSKEGPVLVSSPSRMGLEMLRRQIASVGCIKGPLSMALIRKLSVDDFQRLSLATEMYDMAVAASLTQERGRVAAVPE</sequence>
<gene>
    <name type="ordered locus">Mup41</name>
</gene>
<name>TAP_BPMU</name>
<protein>
    <recommendedName>
        <fullName>Probable tail assembly protein gp41</fullName>
    </recommendedName>
    <alternativeName>
        <fullName>Gene product 41</fullName>
        <shortName>gp41</shortName>
    </alternativeName>
    <alternativeName>
        <fullName>Tail assembly chaperone</fullName>
    </alternativeName>
</protein>
<keyword id="KW-1035">Host cytoplasm</keyword>
<keyword id="KW-0426">Late protein</keyword>
<keyword id="KW-1185">Reference proteome</keyword>
<keyword id="KW-0688">Ribosomal frameshifting</keyword>
<keyword id="KW-1188">Viral release from host cell</keyword>
<keyword id="KW-1245">Viral tail assembly</keyword>
<dbReference type="EMBL" id="AB000833">
    <property type="protein sequence ID" value="BAA19197.1"/>
    <property type="molecule type" value="Genomic_DNA"/>
</dbReference>
<dbReference type="EMBL" id="AF083977">
    <property type="protein sequence ID" value="AAF01119.1"/>
    <property type="molecule type" value="Genomic_DNA"/>
</dbReference>
<dbReference type="RefSeq" id="NP_050645.1">
    <molecule id="P79680-1"/>
    <property type="nucleotide sequence ID" value="NC_000929.1"/>
</dbReference>
<dbReference type="GeneID" id="2636287"/>
<dbReference type="KEGG" id="vg:2636287"/>
<dbReference type="Proteomes" id="UP000002611">
    <property type="component" value="Genome"/>
</dbReference>
<dbReference type="GO" id="GO:0030430">
    <property type="term" value="C:host cell cytoplasm"/>
    <property type="evidence" value="ECO:0007669"/>
    <property type="project" value="UniProtKB-SubCell"/>
</dbReference>
<dbReference type="GO" id="GO:0098003">
    <property type="term" value="P:viral tail assembly"/>
    <property type="evidence" value="ECO:0007669"/>
    <property type="project" value="UniProtKB-KW"/>
</dbReference>
<dbReference type="GO" id="GO:0075523">
    <property type="term" value="P:viral translational frameshifting"/>
    <property type="evidence" value="ECO:0007669"/>
    <property type="project" value="UniProtKB-KW"/>
</dbReference>
<dbReference type="InterPro" id="IPR056974">
    <property type="entry name" value="Tail_Gp41-like"/>
</dbReference>
<dbReference type="Pfam" id="PF23746">
    <property type="entry name" value="Gp41_Mu"/>
    <property type="match status" value="1"/>
</dbReference>
<comment type="function">
    <text evidence="2">Required for tail assembly (Probable). Together with FS-gp41, may act as a chaperone mediating the interaction between the tape measure protein (TMP) and the tail tube protein (TTP) thereby directing the polymerization of TTP to form a tail of the correct length (Potential).</text>
</comment>
<comment type="subcellular location">
    <subcellularLocation>
        <location evidence="2">Host cytoplasm</location>
    </subcellularLocation>
</comment>
<comment type="alternative products">
    <event type="ribosomal frameshifting"/>
    <isoform>
        <id>P79680-1</id>
        <name>Tail assembly chaperone gp41</name>
        <sequence type="displayed"/>
    </isoform>
    <isoform>
        <id>P0DJY4-1</id>
        <name>Tail assembly chaperone FS-gp41</name>
        <sequence type="external"/>
    </isoform>
</comment>
<comment type="induction">
    <text evidence="1">Expressed in the late phase of the viral replicative cycle. Expression of late genes is activated by the viral late transcription activator C.</text>
</comment>
<comment type="miscellaneous">
    <molecule>Isoform Tail assembly chaperone gp41</molecule>
    <text>Produced by conventional translation.</text>
</comment>
<comment type="similarity">
    <text evidence="2">Belongs to the mulikevirus tail assembly protein family.</text>
</comment>
<organismHost>
    <name type="scientific">Enterobacteriaceae</name>
    <dbReference type="NCBI Taxonomy" id="543"/>
</organismHost>
<feature type="chain" id="PRO_0000077834" description="Probable tail assembly protein gp41">
    <location>
        <begin position="1"/>
        <end position="144"/>
    </location>
</feature>
<accession>P79680</accession>
<reference key="1">
    <citation type="journal article" date="1998" name="Biochim. Biophys. Acta">
        <title>Discovery of the tail tube gene of bacteriophage Mu and sequence analysis of the sheath and tube genes.</title>
        <authorList>
            <person name="Takeda S."/>
            <person name="Sasaki T."/>
            <person name="Ritani A."/>
            <person name="Howe M.M."/>
            <person name="Arisaka F."/>
        </authorList>
    </citation>
    <scope>NUCLEOTIDE SEQUENCE [GENOMIC DNA]</scope>
</reference>
<reference key="2">
    <citation type="journal article" date="2002" name="J. Mol. Biol.">
        <title>Bacteriophage Mu genome sequence: analysis and comparison with Mu-like prophages in Haemophilus, Neisseria and Deinococcus.</title>
        <authorList>
            <person name="Morgan G.J."/>
            <person name="Hatfull G.F."/>
            <person name="Casjens S."/>
            <person name="Hendrix R.W."/>
        </authorList>
    </citation>
    <scope>NUCLEOTIDE SEQUENCE [LARGE SCALE GENOMIC DNA]</scope>
</reference>
<reference key="3">
    <citation type="journal article" date="1993" name="Genetics">
        <title>Mutational analysis of a C-dependent late promoter of bacteriophage Mu.</title>
        <authorList>
            <person name="Chiang L.W."/>
            <person name="Howe M.M."/>
        </authorList>
    </citation>
    <scope>INDUCTION</scope>
</reference>
<reference key="4">
    <citation type="journal article" date="2004" name="Mol. Cell">
        <title>Conserved translational frameshift in dsDNA bacteriophage tail assembly genes.</title>
        <authorList>
            <person name="Xu J."/>
            <person name="Hendrix R.W."/>
            <person name="Duda R.L."/>
        </authorList>
    </citation>
    <scope>RIBOSOMAL FRAMESHIFT</scope>
</reference>
<organism>
    <name type="scientific">Escherichia phage Mu</name>
    <name type="common">Bacteriophage Mu</name>
    <dbReference type="NCBI Taxonomy" id="2681603"/>
    <lineage>
        <taxon>Viruses</taxon>
        <taxon>Duplodnaviria</taxon>
        <taxon>Heunggongvirae</taxon>
        <taxon>Uroviricota</taxon>
        <taxon>Caudoviricetes</taxon>
        <taxon>Muvirus</taxon>
        <taxon>Muvirus mu</taxon>
    </lineage>
</organism>
<evidence type="ECO:0000269" key="1">
    <source>
    </source>
</evidence>
<evidence type="ECO:0000305" key="2"/>